<dbReference type="EMBL" id="U01878">
    <property type="protein sequence ID" value="AAA79998.1"/>
    <property type="molecule type" value="Genomic_DNA"/>
</dbReference>
<dbReference type="EMBL" id="Z28300">
    <property type="protein sequence ID" value="CAA82154.1"/>
    <property type="molecule type" value="Genomic_DNA"/>
</dbReference>
<dbReference type="EMBL" id="AY557911">
    <property type="protein sequence ID" value="AAS56237.1"/>
    <property type="molecule type" value="Genomic_DNA"/>
</dbReference>
<dbReference type="EMBL" id="BK006944">
    <property type="protein sequence ID" value="DAA09225.1"/>
    <property type="molecule type" value="Genomic_DNA"/>
</dbReference>
<dbReference type="PIR" id="S38152">
    <property type="entry name" value="S38152"/>
</dbReference>
<dbReference type="RefSeq" id="NP_013001.1">
    <property type="nucleotide sequence ID" value="NM_001179865.1"/>
</dbReference>
<dbReference type="BioGRID" id="34206">
    <property type="interactions" value="80"/>
</dbReference>
<dbReference type="FunCoup" id="P36155">
    <property type="interactions" value="60"/>
</dbReference>
<dbReference type="IntAct" id="P36155">
    <property type="interactions" value="1"/>
</dbReference>
<dbReference type="MINT" id="P36155"/>
<dbReference type="STRING" id="4932.YKR075C"/>
<dbReference type="iPTMnet" id="P36155"/>
<dbReference type="PaxDb" id="4932-YKR075C"/>
<dbReference type="PeptideAtlas" id="P36155"/>
<dbReference type="EnsemblFungi" id="YKR075C_mRNA">
    <property type="protein sequence ID" value="YKR075C"/>
    <property type="gene ID" value="YKR075C"/>
</dbReference>
<dbReference type="GeneID" id="853950"/>
<dbReference type="KEGG" id="sce:YKR075C"/>
<dbReference type="AGR" id="SGD:S000001783"/>
<dbReference type="SGD" id="S000001783">
    <property type="gene designation" value="YKR075C"/>
</dbReference>
<dbReference type="VEuPathDB" id="FungiDB:YKR075C"/>
<dbReference type="eggNOG" id="ENOG502RYV2">
    <property type="taxonomic scope" value="Eukaryota"/>
</dbReference>
<dbReference type="GeneTree" id="ENSGT00940000176469"/>
<dbReference type="HOGENOM" id="CLU_058084_1_0_1"/>
<dbReference type="InParanoid" id="P36155"/>
<dbReference type="OMA" id="HHEFNDA"/>
<dbReference type="OrthoDB" id="5563539at2759"/>
<dbReference type="BioCyc" id="YEAST:G3O-32039-MONOMER"/>
<dbReference type="BioGRID-ORCS" id="853950">
    <property type="hits" value="6 hits in 10 CRISPR screens"/>
</dbReference>
<dbReference type="PRO" id="PR:P36155"/>
<dbReference type="Proteomes" id="UP000002311">
    <property type="component" value="Chromosome XI"/>
</dbReference>
<dbReference type="RNAct" id="P36155">
    <property type="molecule type" value="protein"/>
</dbReference>
<dbReference type="GO" id="GO:0005737">
    <property type="term" value="C:cytoplasm"/>
    <property type="evidence" value="ECO:0007005"/>
    <property type="project" value="SGD"/>
</dbReference>
<dbReference type="GO" id="GO:0005634">
    <property type="term" value="C:nucleus"/>
    <property type="evidence" value="ECO:0007005"/>
    <property type="project" value="SGD"/>
</dbReference>
<dbReference type="GO" id="GO:0005773">
    <property type="term" value="C:vacuole"/>
    <property type="evidence" value="ECO:0007669"/>
    <property type="project" value="GOC"/>
</dbReference>
<dbReference type="GO" id="GO:0042149">
    <property type="term" value="P:cellular response to glucose starvation"/>
    <property type="evidence" value="ECO:0000318"/>
    <property type="project" value="GO_Central"/>
</dbReference>
<dbReference type="GO" id="GO:0007039">
    <property type="term" value="P:protein catabolic process in the vacuole"/>
    <property type="evidence" value="ECO:0000318"/>
    <property type="project" value="GO_Central"/>
</dbReference>
<dbReference type="InterPro" id="IPR052292">
    <property type="entry name" value="Glucose_repression_reg"/>
</dbReference>
<dbReference type="PANTHER" id="PTHR28051">
    <property type="entry name" value="PROTEIN MTL1-RELATED"/>
    <property type="match status" value="1"/>
</dbReference>
<dbReference type="PANTHER" id="PTHR28051:SF1">
    <property type="entry name" value="PROTEIN MTL1-RELATED"/>
    <property type="match status" value="1"/>
</dbReference>
<organism>
    <name type="scientific">Saccharomyces cerevisiae (strain ATCC 204508 / S288c)</name>
    <name type="common">Baker's yeast</name>
    <dbReference type="NCBI Taxonomy" id="559292"/>
    <lineage>
        <taxon>Eukaryota</taxon>
        <taxon>Fungi</taxon>
        <taxon>Dikarya</taxon>
        <taxon>Ascomycota</taxon>
        <taxon>Saccharomycotina</taxon>
        <taxon>Saccharomycetes</taxon>
        <taxon>Saccharomycetales</taxon>
        <taxon>Saccharomycetaceae</taxon>
        <taxon>Saccharomyces</taxon>
    </lineage>
</organism>
<accession>P36155</accession>
<accession>D6VXD5</accession>
<name>YK55_YEAST</name>
<protein>
    <recommendedName>
        <fullName>Uncharacterized protein YKR075C</fullName>
    </recommendedName>
</protein>
<gene>
    <name type="ordered locus">YKR075C</name>
</gene>
<comment type="miscellaneous">
    <text evidence="2">Present with 1960 molecules/cell in log phase SD medium.</text>
</comment>
<comment type="similarity">
    <text evidence="3">To yeast YOR062c.</text>
</comment>
<feature type="chain" id="PRO_0000203222" description="Uncharacterized protein YKR075C">
    <location>
        <begin position="1"/>
        <end position="307"/>
    </location>
</feature>
<feature type="region of interest" description="Disordered" evidence="1">
    <location>
        <begin position="254"/>
        <end position="278"/>
    </location>
</feature>
<feature type="compositionally biased region" description="Basic residues" evidence="1">
    <location>
        <begin position="255"/>
        <end position="272"/>
    </location>
</feature>
<keyword id="KW-1185">Reference proteome</keyword>
<evidence type="ECO:0000256" key="1">
    <source>
        <dbReference type="SAM" id="MobiDB-lite"/>
    </source>
</evidence>
<evidence type="ECO:0000269" key="2">
    <source>
    </source>
</evidence>
<evidence type="ECO:0000305" key="3"/>
<sequence>MTSLDDTIISYQNIMLLDNMTNYNKPAIDYFHHEFNDASLEISASWTLLLKMRKHKLLRLPSCSSEDVLDYNMYLVRLHHCLWRRWSINHYGLQNSKSNPLSINWNKETDVTVLYGPDLTNIDSNENEISPVQNQIDQKQTKNLKSALKKNTECWVTEEVDEINASIESNDNALVKLEDISCPSSVDSHTSSIFDQHSTCTKISSIDEDSEDLMNEKKEQFPRKLKFNQAVMKREIDSKGTIRESLININDIQHSRHHRRHHRRHHHHHHQNSSHSDETIKEAHYEFSNYTFGTMEEDIFYRNQVVF</sequence>
<reference key="1">
    <citation type="journal article" date="1995" name="Genetics">
        <title>Overexpression of SIS2, which contains an extremely acidic region, increases the expression of SWI4, CLN1 and CLN2 in sit4 mutants.</title>
        <authorList>
            <person name="di Como C.J."/>
            <person name="Bose R."/>
            <person name="Arndt K.T."/>
        </authorList>
    </citation>
    <scope>NUCLEOTIDE SEQUENCE [GENOMIC DNA]</scope>
</reference>
<reference key="2">
    <citation type="journal article" date="1994" name="Nature">
        <title>Complete DNA sequence of yeast chromosome XI.</title>
        <authorList>
            <person name="Dujon B."/>
            <person name="Alexandraki D."/>
            <person name="Andre B."/>
            <person name="Ansorge W."/>
            <person name="Baladron V."/>
            <person name="Ballesta J.P.G."/>
            <person name="Banrevi A."/>
            <person name="Bolle P.-A."/>
            <person name="Bolotin-Fukuhara M."/>
            <person name="Bossier P."/>
            <person name="Bou G."/>
            <person name="Boyer J."/>
            <person name="Buitrago M.J."/>
            <person name="Cheret G."/>
            <person name="Colleaux L."/>
            <person name="Daignan-Fornier B."/>
            <person name="del Rey F."/>
            <person name="Dion C."/>
            <person name="Domdey H."/>
            <person name="Duesterhoeft A."/>
            <person name="Duesterhus S."/>
            <person name="Entian K.-D."/>
            <person name="Erfle H."/>
            <person name="Esteban P.F."/>
            <person name="Feldmann H."/>
            <person name="Fernandes L."/>
            <person name="Fobo G.M."/>
            <person name="Fritz C."/>
            <person name="Fukuhara H."/>
            <person name="Gabel C."/>
            <person name="Gaillon L."/>
            <person name="Garcia-Cantalejo J.M."/>
            <person name="Garcia-Ramirez J.J."/>
            <person name="Gent M.E."/>
            <person name="Ghazvini M."/>
            <person name="Goffeau A."/>
            <person name="Gonzalez A."/>
            <person name="Grothues D."/>
            <person name="Guerreiro P."/>
            <person name="Hegemann J.H."/>
            <person name="Hewitt N."/>
            <person name="Hilger F."/>
            <person name="Hollenberg C.P."/>
            <person name="Horaitis O."/>
            <person name="Indge K.J."/>
            <person name="Jacquier A."/>
            <person name="James C.M."/>
            <person name="Jauniaux J.-C."/>
            <person name="Jimenez A."/>
            <person name="Keuchel H."/>
            <person name="Kirchrath L."/>
            <person name="Kleine K."/>
            <person name="Koetter P."/>
            <person name="Legrain P."/>
            <person name="Liebl S."/>
            <person name="Louis E.J."/>
            <person name="Maia e Silva A."/>
            <person name="Marck C."/>
            <person name="Monnier A.-L."/>
            <person name="Moestl D."/>
            <person name="Mueller S."/>
            <person name="Obermaier B."/>
            <person name="Oliver S.G."/>
            <person name="Pallier C."/>
            <person name="Pascolo S."/>
            <person name="Pfeiffer F."/>
            <person name="Philippsen P."/>
            <person name="Planta R.J."/>
            <person name="Pohl F.M."/>
            <person name="Pohl T.M."/>
            <person name="Poehlmann R."/>
            <person name="Portetelle D."/>
            <person name="Purnelle B."/>
            <person name="Puzos V."/>
            <person name="Ramezani Rad M."/>
            <person name="Rasmussen S.W."/>
            <person name="Remacha M.A."/>
            <person name="Revuelta J.L."/>
            <person name="Richard G.-F."/>
            <person name="Rieger M."/>
            <person name="Rodrigues-Pousada C."/>
            <person name="Rose M."/>
            <person name="Rupp T."/>
            <person name="Santos M.A."/>
            <person name="Schwager C."/>
            <person name="Sensen C."/>
            <person name="Skala J."/>
            <person name="Soares H."/>
            <person name="Sor F."/>
            <person name="Stegemann J."/>
            <person name="Tettelin H."/>
            <person name="Thierry A."/>
            <person name="Tzermia M."/>
            <person name="Urrestarazu L.A."/>
            <person name="van Dyck L."/>
            <person name="van Vliet-Reedijk J.C."/>
            <person name="Valens M."/>
            <person name="Vandenbol M."/>
            <person name="Vilela C."/>
            <person name="Vissers S."/>
            <person name="von Wettstein D."/>
            <person name="Voss H."/>
            <person name="Wiemann S."/>
            <person name="Xu G."/>
            <person name="Zimmermann J."/>
            <person name="Haasemann M."/>
            <person name="Becker I."/>
            <person name="Mewes H.-W."/>
        </authorList>
    </citation>
    <scope>NUCLEOTIDE SEQUENCE [LARGE SCALE GENOMIC DNA]</scope>
    <source>
        <strain>ATCC 204508 / S288c</strain>
    </source>
</reference>
<reference key="3">
    <citation type="journal article" date="2014" name="G3 (Bethesda)">
        <title>The reference genome sequence of Saccharomyces cerevisiae: Then and now.</title>
        <authorList>
            <person name="Engel S.R."/>
            <person name="Dietrich F.S."/>
            <person name="Fisk D.G."/>
            <person name="Binkley G."/>
            <person name="Balakrishnan R."/>
            <person name="Costanzo M.C."/>
            <person name="Dwight S.S."/>
            <person name="Hitz B.C."/>
            <person name="Karra K."/>
            <person name="Nash R.S."/>
            <person name="Weng S."/>
            <person name="Wong E.D."/>
            <person name="Lloyd P."/>
            <person name="Skrzypek M.S."/>
            <person name="Miyasato S.R."/>
            <person name="Simison M."/>
            <person name="Cherry J.M."/>
        </authorList>
    </citation>
    <scope>GENOME REANNOTATION</scope>
    <source>
        <strain>ATCC 204508 / S288c</strain>
    </source>
</reference>
<reference key="4">
    <citation type="journal article" date="2007" name="Genome Res.">
        <title>Approaching a complete repository of sequence-verified protein-encoding clones for Saccharomyces cerevisiae.</title>
        <authorList>
            <person name="Hu Y."/>
            <person name="Rolfs A."/>
            <person name="Bhullar B."/>
            <person name="Murthy T.V.S."/>
            <person name="Zhu C."/>
            <person name="Berger M.F."/>
            <person name="Camargo A.A."/>
            <person name="Kelley F."/>
            <person name="McCarron S."/>
            <person name="Jepson D."/>
            <person name="Richardson A."/>
            <person name="Raphael J."/>
            <person name="Moreira D."/>
            <person name="Taycher E."/>
            <person name="Zuo D."/>
            <person name="Mohr S."/>
            <person name="Kane M.F."/>
            <person name="Williamson J."/>
            <person name="Simpson A.J.G."/>
            <person name="Bulyk M.L."/>
            <person name="Harlow E."/>
            <person name="Marsischky G."/>
            <person name="Kolodner R.D."/>
            <person name="LaBaer J."/>
        </authorList>
    </citation>
    <scope>NUCLEOTIDE SEQUENCE [GENOMIC DNA]</scope>
    <source>
        <strain>ATCC 204508 / S288c</strain>
    </source>
</reference>
<reference key="5">
    <citation type="journal article" date="2003" name="Nature">
        <title>Global analysis of protein expression in yeast.</title>
        <authorList>
            <person name="Ghaemmaghami S."/>
            <person name="Huh W.-K."/>
            <person name="Bower K."/>
            <person name="Howson R.W."/>
            <person name="Belle A."/>
            <person name="Dephoure N."/>
            <person name="O'Shea E.K."/>
            <person name="Weissman J.S."/>
        </authorList>
    </citation>
    <scope>LEVEL OF PROTEIN EXPRESSION [LARGE SCALE ANALYSIS]</scope>
</reference>
<proteinExistence type="evidence at protein level"/>